<evidence type="ECO:0000255" key="1"/>
<evidence type="ECO:0000269" key="2">
    <source>
    </source>
</evidence>
<evidence type="ECO:0000269" key="3">
    <source>
    </source>
</evidence>
<evidence type="ECO:0000269" key="4">
    <source>
    </source>
</evidence>
<evidence type="ECO:0000305" key="5"/>
<name>PDE1_DICDI</name>
<keyword id="KW-0114">cAMP</keyword>
<keyword id="KW-0116">cAMP-binding</keyword>
<keyword id="KW-0140">cGMP</keyword>
<keyword id="KW-0142">cGMP-binding</keyword>
<keyword id="KW-0325">Glycoprotein</keyword>
<keyword id="KW-0378">Hydrolase</keyword>
<keyword id="KW-0547">Nucleotide-binding</keyword>
<keyword id="KW-1185">Reference proteome</keyword>
<keyword id="KW-0964">Secreted</keyword>
<keyword id="KW-0732">Signal</keyword>
<keyword id="KW-0862">Zinc</keyword>
<sequence length="452" mass="51093">MALNKKLISLLLLIFIILNIVNSHQQEDCDDDDEDIGISAERSERRSVKNSNDGSNFYNLNDYYTPENWNYYSGSFATKDCRDASYITIPLGTTGGLDEGNLSSFLLTKKGSNLFIALDAGTVWQGVRRLTTFKYFNTLFNITYPSWAVLPEQRTSWFLKNHVMSYFIGHSHLDHVGGLILVSPEDYLAKNWIDVQPPINNGIMGLIRKLGFKPTDFTSSSILQKKTIMGLPSTINSISTNLFNNQVWPNLPSFGRYQYFSLASGIEYPFTELVPYNATTMSLVANEFPFSVKVKPFELCHDNLISTSFLFTDSISGEQIAFFSDTGVPSSVACDWEGKIYAVWKQIKIDKLKAIYIETSFPNNTPDSAMFGHLRPRDVMKLMDQLLVQSIQTSPPMTNLKHVKLIIEHIKPQVAEDPNGWTTQRVIYQQLKEANNNGVRIIIPNQGDPICI</sequence>
<feature type="signal peptide" evidence="1">
    <location>
        <begin position="1"/>
        <end position="23"/>
    </location>
</feature>
<feature type="propeptide" id="PRO_0000023352" evidence="1">
    <location>
        <begin position="24"/>
        <end position="49"/>
    </location>
</feature>
<feature type="chain" id="PRO_0000023353" description="cAMP/cGMP-dependent 3',5'-cAMP/cGMP phosphodiesterase A">
    <location>
        <begin position="50"/>
        <end position="452"/>
    </location>
</feature>
<feature type="glycosylation site" description="N-linked (GlcNAc...) asparagine" evidence="1">
    <location>
        <position position="101"/>
    </location>
</feature>
<feature type="glycosylation site" description="N-linked (GlcNAc...) asparagine" evidence="1">
    <location>
        <position position="141"/>
    </location>
</feature>
<feature type="glycosylation site" description="N-linked (GlcNAc...) asparagine" evidence="1">
    <location>
        <position position="277"/>
    </location>
</feature>
<feature type="sequence conflict" description="In Ref. 4; AAA33238." evidence="5" ref="4">
    <original>NW</original>
    <variation>LT</variation>
    <location>
        <begin position="68"/>
        <end position="69"/>
    </location>
</feature>
<reference key="1">
    <citation type="journal article" date="1986" name="J. Biol. Chem.">
        <title>Molecular cloning and developmental expression of the cyclic nucleotide phosphodiesterase gene of Dictyostelium discoideum.</title>
        <authorList>
            <person name="Lacombe M.-L."/>
            <person name="Podgorski G.J."/>
            <person name="Franke J."/>
            <person name="Kessin R.H."/>
        </authorList>
    </citation>
    <scope>NUCLEOTIDE SEQUENCE [MRNA]</scope>
</reference>
<reference key="2">
    <citation type="journal article" date="1989" name="Mol. Cell. Biol.">
        <title>The cyclic nucleotide phosphodiesterase gene of Dictyostelium discoideum utilizes alternate promoters and splicing for the synthesis of multiple mRNAs.</title>
        <authorList>
            <person name="Podgorski G.J."/>
            <person name="Franke J."/>
            <person name="Faure M."/>
            <person name="Kessin R.H."/>
        </authorList>
    </citation>
    <scope>NUCLEOTIDE SEQUENCE [GENOMIC DNA]</scope>
</reference>
<reference key="3">
    <citation type="journal article" date="2005" name="Nature">
        <title>The genome of the social amoeba Dictyostelium discoideum.</title>
        <authorList>
            <person name="Eichinger L."/>
            <person name="Pachebat J.A."/>
            <person name="Gloeckner G."/>
            <person name="Rajandream M.A."/>
            <person name="Sucgang R."/>
            <person name="Berriman M."/>
            <person name="Song J."/>
            <person name="Olsen R."/>
            <person name="Szafranski K."/>
            <person name="Xu Q."/>
            <person name="Tunggal B."/>
            <person name="Kummerfeld S."/>
            <person name="Madera M."/>
            <person name="Konfortov B.A."/>
            <person name="Rivero F."/>
            <person name="Bankier A.T."/>
            <person name="Lehmann R."/>
            <person name="Hamlin N."/>
            <person name="Davies R."/>
            <person name="Gaudet P."/>
            <person name="Fey P."/>
            <person name="Pilcher K."/>
            <person name="Chen G."/>
            <person name="Saunders D."/>
            <person name="Sodergren E.J."/>
            <person name="Davis P."/>
            <person name="Kerhornou A."/>
            <person name="Nie X."/>
            <person name="Hall N."/>
            <person name="Anjard C."/>
            <person name="Hemphill L."/>
            <person name="Bason N."/>
            <person name="Farbrother P."/>
            <person name="Desany B."/>
            <person name="Just E."/>
            <person name="Morio T."/>
            <person name="Rost R."/>
            <person name="Churcher C.M."/>
            <person name="Cooper J."/>
            <person name="Haydock S."/>
            <person name="van Driessche N."/>
            <person name="Cronin A."/>
            <person name="Goodhead I."/>
            <person name="Muzny D.M."/>
            <person name="Mourier T."/>
            <person name="Pain A."/>
            <person name="Lu M."/>
            <person name="Harper D."/>
            <person name="Lindsay R."/>
            <person name="Hauser H."/>
            <person name="James K.D."/>
            <person name="Quiles M."/>
            <person name="Madan Babu M."/>
            <person name="Saito T."/>
            <person name="Buchrieser C."/>
            <person name="Wardroper A."/>
            <person name="Felder M."/>
            <person name="Thangavelu M."/>
            <person name="Johnson D."/>
            <person name="Knights A."/>
            <person name="Loulseged H."/>
            <person name="Mungall K.L."/>
            <person name="Oliver K."/>
            <person name="Price C."/>
            <person name="Quail M.A."/>
            <person name="Urushihara H."/>
            <person name="Hernandez J."/>
            <person name="Rabbinowitsch E."/>
            <person name="Steffen D."/>
            <person name="Sanders M."/>
            <person name="Ma J."/>
            <person name="Kohara Y."/>
            <person name="Sharp S."/>
            <person name="Simmonds M.N."/>
            <person name="Spiegler S."/>
            <person name="Tivey A."/>
            <person name="Sugano S."/>
            <person name="White B."/>
            <person name="Walker D."/>
            <person name="Woodward J.R."/>
            <person name="Winckler T."/>
            <person name="Tanaka Y."/>
            <person name="Shaulsky G."/>
            <person name="Schleicher M."/>
            <person name="Weinstock G.M."/>
            <person name="Rosenthal A."/>
            <person name="Cox E.C."/>
            <person name="Chisholm R.L."/>
            <person name="Gibbs R.A."/>
            <person name="Loomis W.F."/>
            <person name="Platzer M."/>
            <person name="Kay R.R."/>
            <person name="Williams J.G."/>
            <person name="Dear P.H."/>
            <person name="Noegel A.A."/>
            <person name="Barrell B.G."/>
            <person name="Kuspa A."/>
        </authorList>
    </citation>
    <scope>NUCLEOTIDE SEQUENCE [LARGE SCALE GENOMIC DNA]</scope>
    <source>
        <strain>AX4</strain>
    </source>
</reference>
<reference key="4">
    <citation type="journal article" date="1986" name="J. Gen. Microbiol.">
        <title>Isolation of a cDNA encoding a portion of the cyclic nucleotide phosphodiesterase of Dictyostelium discoideum.</title>
        <authorList>
            <person name="Podgorski G.J."/>
            <person name="Franke J."/>
            <person name="Kessin R.H."/>
        </authorList>
    </citation>
    <scope>NUCLEOTIDE SEQUENCE [MRNA] OF 1-69</scope>
</reference>
<reference key="5">
    <citation type="journal article" date="2002" name="Mol. Biol. Cell">
        <title>Identification and characterization of two unusual cGMP-stimulated phosphodiesterases in dictyostelium.</title>
        <authorList>
            <person name="Bosgraaf L."/>
            <person name="Russcher H."/>
            <person name="Snippe H."/>
            <person name="Bader S."/>
            <person name="Wind J."/>
            <person name="Van Haastert P.J.M."/>
        </authorList>
    </citation>
    <scope>FUNCTION</scope>
    <scope>BIOPHYSICOCHEMICAL PROPERTIES</scope>
</reference>
<reference key="6">
    <citation type="journal article" date="2007" name="Biochem. J.">
        <title>Seven Dictyostelium discoideum phosphodiesterases degrade three pools of cAMP and cGMP.</title>
        <authorList>
            <person name="Bader S."/>
            <person name="Kortholt A."/>
            <person name="Van Haastert P.J.M."/>
        </authorList>
    </citation>
    <scope>SUBCELLULAR LOCATION</scope>
    <scope>ACTIVITY REGULATION</scope>
</reference>
<reference key="7">
    <citation type="journal article" date="2007" name="J. Biomed. Inform.">
        <title>Precedence temporal networks to represent temporal relationships in gene expression data.</title>
        <authorList>
            <person name="Sacchi L."/>
            <person name="Larizza C."/>
            <person name="Magni P."/>
            <person name="Bellazzi R."/>
        </authorList>
    </citation>
    <scope>IDENTIFICATION</scope>
</reference>
<reference key="8">
    <citation type="journal article" date="2008" name="BMC Microbiol.">
        <title>Dictyostelium transcriptional responses to Pseudomonas aeruginosa: common and specific effects from PAO1 and PA14 strains.</title>
        <authorList>
            <person name="Carilla-Latorre S."/>
            <person name="Calvo-Garrido J."/>
            <person name="Bloomfield G."/>
            <person name="Skelton J."/>
            <person name="Kay R.R."/>
            <person name="Ivens A."/>
            <person name="Martinez J.L."/>
            <person name="Escalante R."/>
        </authorList>
    </citation>
    <scope>INDUCTION [LARGE SCALE ANALYSIS]</scope>
</reference>
<protein>
    <recommendedName>
        <fullName>cAMP/cGMP-dependent 3',5'-cAMP/cGMP phosphodiesterase A</fullName>
        <shortName>PDEase A</shortName>
        <ecNumber>3.1.4.35</ecNumber>
        <ecNumber>3.1.4.53</ecNumber>
    </recommendedName>
    <alternativeName>
        <fullName>3',5'-cyclic-nucleotide phosphodiesterase</fullName>
        <shortName>3':5'-CNP</shortName>
    </alternativeName>
    <alternativeName>
        <fullName>Phosphodiesterase 1</fullName>
        <shortName>DdPDE1</shortName>
    </alternativeName>
    <alternativeName>
        <fullName>cAMP/cGMP-dependent 3',5'-cAMP/cGMP phosphodiesterase 1</fullName>
    </alternativeName>
</protein>
<dbReference type="EC" id="3.1.4.35"/>
<dbReference type="EC" id="3.1.4.53"/>
<dbReference type="EMBL" id="J02628">
    <property type="protein sequence ID" value="AAA68447.1"/>
    <property type="molecule type" value="mRNA"/>
</dbReference>
<dbReference type="EMBL" id="M23449">
    <property type="protein sequence ID" value="AAA63168.1"/>
    <property type="molecule type" value="Genomic_DNA"/>
</dbReference>
<dbReference type="EMBL" id="AAFI02000083">
    <property type="protein sequence ID" value="EAL64439.1"/>
    <property type="molecule type" value="Genomic_DNA"/>
</dbReference>
<dbReference type="EMBL" id="M15738">
    <property type="protein sequence ID" value="AAA33238.1"/>
    <property type="molecule type" value="mRNA"/>
</dbReference>
<dbReference type="PIR" id="A32573">
    <property type="entry name" value="A25346"/>
</dbReference>
<dbReference type="RefSeq" id="XP_637948.1">
    <property type="nucleotide sequence ID" value="XM_632856.1"/>
</dbReference>
<dbReference type="SMR" id="P12019"/>
<dbReference type="FunCoup" id="P12019">
    <property type="interactions" value="2"/>
</dbReference>
<dbReference type="STRING" id="44689.P12019"/>
<dbReference type="GlyCosmos" id="P12019">
    <property type="glycosylation" value="3 sites, No reported glycans"/>
</dbReference>
<dbReference type="GlyGen" id="P12019">
    <property type="glycosylation" value="3 sites"/>
</dbReference>
<dbReference type="PaxDb" id="44689-DDB0219974"/>
<dbReference type="EnsemblProtists" id="EAL64439">
    <property type="protein sequence ID" value="EAL64439"/>
    <property type="gene ID" value="DDB_G0285995"/>
</dbReference>
<dbReference type="GeneID" id="8625393"/>
<dbReference type="KEGG" id="ddi:DDB_G0285995"/>
<dbReference type="dictyBase" id="DDB_G0285995">
    <property type="gene designation" value="pdsA"/>
</dbReference>
<dbReference type="VEuPathDB" id="AmoebaDB:DDB_G0285995"/>
<dbReference type="eggNOG" id="ENOG502RC36">
    <property type="taxonomic scope" value="Eukaryota"/>
</dbReference>
<dbReference type="HOGENOM" id="CLU_606124_0_0_1"/>
<dbReference type="InParanoid" id="P12019"/>
<dbReference type="OMA" id="YYITHPH"/>
<dbReference type="PhylomeDB" id="P12019"/>
<dbReference type="SABIO-RK" id="P12019"/>
<dbReference type="PRO" id="PR:P12019"/>
<dbReference type="Proteomes" id="UP000002195">
    <property type="component" value="Chromosome 4"/>
</dbReference>
<dbReference type="GO" id="GO:0009986">
    <property type="term" value="C:cell surface"/>
    <property type="evidence" value="ECO:0007669"/>
    <property type="project" value="UniProtKB-SubCell"/>
</dbReference>
<dbReference type="GO" id="GO:0005783">
    <property type="term" value="C:endoplasmic reticulum"/>
    <property type="evidence" value="ECO:0000314"/>
    <property type="project" value="dictyBase"/>
</dbReference>
<dbReference type="GO" id="GO:0005576">
    <property type="term" value="C:extracellular region"/>
    <property type="evidence" value="ECO:0000314"/>
    <property type="project" value="dictyBase"/>
</dbReference>
<dbReference type="GO" id="GO:0005886">
    <property type="term" value="C:plasma membrane"/>
    <property type="evidence" value="ECO:0000314"/>
    <property type="project" value="dictyBase"/>
</dbReference>
<dbReference type="GO" id="GO:0004115">
    <property type="term" value="F:3',5'-cyclic-AMP phosphodiesterase activity"/>
    <property type="evidence" value="ECO:0000314"/>
    <property type="project" value="dictyBase"/>
</dbReference>
<dbReference type="GO" id="GO:0047555">
    <property type="term" value="F:3',5'-cyclic-GMP phosphodiesterase activity"/>
    <property type="evidence" value="ECO:0000316"/>
    <property type="project" value="dictyBase"/>
</dbReference>
<dbReference type="GO" id="GO:0004114">
    <property type="term" value="F:3',5'-cyclic-nucleotide phosphodiesterase activity"/>
    <property type="evidence" value="ECO:0000314"/>
    <property type="project" value="dictyBase"/>
</dbReference>
<dbReference type="GO" id="GO:0030552">
    <property type="term" value="F:cAMP binding"/>
    <property type="evidence" value="ECO:0000314"/>
    <property type="project" value="dictyBase"/>
</dbReference>
<dbReference type="GO" id="GO:0030553">
    <property type="term" value="F:cGMP binding"/>
    <property type="evidence" value="ECO:0007669"/>
    <property type="project" value="UniProtKB-KW"/>
</dbReference>
<dbReference type="GO" id="GO:0007193">
    <property type="term" value="P:adenylate cyclase-inhibiting G protein-coupled receptor signaling pathway"/>
    <property type="evidence" value="ECO:0000315"/>
    <property type="project" value="dictyBase"/>
</dbReference>
<dbReference type="GO" id="GO:0031152">
    <property type="term" value="P:aggregation involved in sorocarp development"/>
    <property type="evidence" value="ECO:0000315"/>
    <property type="project" value="dictyBase"/>
</dbReference>
<dbReference type="GO" id="GO:0006198">
    <property type="term" value="P:cAMP catabolic process"/>
    <property type="evidence" value="ECO:0007669"/>
    <property type="project" value="InterPro"/>
</dbReference>
<dbReference type="GO" id="GO:1900115">
    <property type="term" value="P:extracellular regulation of signal transduction"/>
    <property type="evidence" value="ECO:0000315"/>
    <property type="project" value="dictyBase"/>
</dbReference>
<dbReference type="GO" id="GO:1902660">
    <property type="term" value="P:negative regulation of glucose mediated signaling pathway"/>
    <property type="evidence" value="ECO:0000318"/>
    <property type="project" value="GO_Central"/>
</dbReference>
<dbReference type="GO" id="GO:0051591">
    <property type="term" value="P:response to cAMP"/>
    <property type="evidence" value="ECO:0000314"/>
    <property type="project" value="dictyBase"/>
</dbReference>
<dbReference type="GO" id="GO:1902168">
    <property type="term" value="P:response to catechin"/>
    <property type="evidence" value="ECO:0000314"/>
    <property type="project" value="dictyBase"/>
</dbReference>
<dbReference type="GO" id="GO:1903013">
    <property type="term" value="P:response to differentiation-inducing factor 1"/>
    <property type="evidence" value="ECO:0000314"/>
    <property type="project" value="dictyBase"/>
</dbReference>
<dbReference type="GO" id="GO:0072720">
    <property type="term" value="P:response to dithiothreitol"/>
    <property type="evidence" value="ECO:0000314"/>
    <property type="project" value="dictyBase"/>
</dbReference>
<dbReference type="GO" id="GO:0031153">
    <property type="term" value="P:slug development involved in sorocarp development"/>
    <property type="evidence" value="ECO:0000315"/>
    <property type="project" value="dictyBase"/>
</dbReference>
<dbReference type="CDD" id="cd07735">
    <property type="entry name" value="class_II_PDE_MBL-fold"/>
    <property type="match status" value="1"/>
</dbReference>
<dbReference type="FunFam" id="3.60.15.10:FF:000064">
    <property type="entry name" value="Probable 3',5'-cyclic-nucleotide phosphodiesterase"/>
    <property type="match status" value="1"/>
</dbReference>
<dbReference type="Gene3D" id="3.60.15.10">
    <property type="entry name" value="Ribonuclease Z/Hydroxyacylglutathione hydrolase-like"/>
    <property type="match status" value="1"/>
</dbReference>
<dbReference type="InterPro" id="IPR024225">
    <property type="entry name" value="cAMP-PdiesteraseII_CS"/>
</dbReference>
<dbReference type="InterPro" id="IPR000396">
    <property type="entry name" value="Pdiesterase2"/>
</dbReference>
<dbReference type="InterPro" id="IPR036866">
    <property type="entry name" value="RibonucZ/Hydroxyglut_hydro"/>
</dbReference>
<dbReference type="PANTHER" id="PTHR28283">
    <property type="entry name" value="3',5'-CYCLIC-NUCLEOTIDE PHOSPHODIESTERASE 1"/>
    <property type="match status" value="1"/>
</dbReference>
<dbReference type="PANTHER" id="PTHR28283:SF1">
    <property type="entry name" value="3',5'-CYCLIC-NUCLEOTIDE PHOSPHODIESTERASE 1"/>
    <property type="match status" value="1"/>
</dbReference>
<dbReference type="Pfam" id="PF02112">
    <property type="entry name" value="PDEase_II"/>
    <property type="match status" value="1"/>
</dbReference>
<dbReference type="PIRSF" id="PIRSF000962">
    <property type="entry name" value="Cyc_nuc_PDEase"/>
    <property type="match status" value="1"/>
</dbReference>
<dbReference type="PRINTS" id="PR00388">
    <property type="entry name" value="PDIESTERASE2"/>
</dbReference>
<dbReference type="SUPFAM" id="SSF56281">
    <property type="entry name" value="Metallo-hydrolase/oxidoreductase"/>
    <property type="match status" value="1"/>
</dbReference>
<dbReference type="PROSITE" id="PS00607">
    <property type="entry name" value="PDEASE_II"/>
    <property type="match status" value="1"/>
</dbReference>
<gene>
    <name type="primary">pdsA</name>
    <name type="synonym">pde1</name>
    <name type="synonym">pdeA</name>
    <name type="ORF">DDB_G0285995</name>
</gene>
<comment type="function">
    <text evidence="2">Phosphodiesterase which displays a preference for cAMP over cGMP. Involved in the degradation of extracellular cAMP. Maintains the responsiveness of cells to the chemoattractant cAMP during the aggregation phase of development.</text>
</comment>
<comment type="catalytic activity">
    <reaction>
        <text>3',5'-cyclic AMP + H2O = AMP + H(+)</text>
        <dbReference type="Rhea" id="RHEA:25277"/>
        <dbReference type="ChEBI" id="CHEBI:15377"/>
        <dbReference type="ChEBI" id="CHEBI:15378"/>
        <dbReference type="ChEBI" id="CHEBI:58165"/>
        <dbReference type="ChEBI" id="CHEBI:456215"/>
        <dbReference type="EC" id="3.1.4.53"/>
    </reaction>
</comment>
<comment type="catalytic activity">
    <reaction>
        <text>3',5'-cyclic GMP + H2O = GMP + H(+)</text>
        <dbReference type="Rhea" id="RHEA:16957"/>
        <dbReference type="ChEBI" id="CHEBI:15377"/>
        <dbReference type="ChEBI" id="CHEBI:15378"/>
        <dbReference type="ChEBI" id="CHEBI:57746"/>
        <dbReference type="ChEBI" id="CHEBI:58115"/>
        <dbReference type="EC" id="3.1.4.35"/>
    </reaction>
</comment>
<comment type="activity regulation">
    <text evidence="3">Inhibited by dithiotreitol (DTT).</text>
</comment>
<comment type="biophysicochemical properties">
    <kinetics>
        <KM evidence="2">0.8 uM for cAMP</KM>
        <KM evidence="2">1.8 uM for cGMP</KM>
        <Vmax evidence="2">700.0 pmol/min/mg enzyme with cAMP as substrate</Vmax>
        <Vmax evidence="2">490.0 pmol/min/mg enzyme with cGMP as substrate</Vmax>
        <text>cAMP/cGMP selectivity of 3.</text>
    </kinetics>
</comment>
<comment type="subcellular location">
    <subcellularLocation>
        <location evidence="3">Secreted</location>
        <location evidence="3">Extracellular space</location>
    </subcellularLocation>
    <subcellularLocation>
        <location evidence="3">Cell surface</location>
    </subcellularLocation>
</comment>
<comment type="induction">
    <text evidence="4">Up-regulated by Pseudomonas aeruginosa, PA14 strain infection but not by Pseudomonas aeruginosa, PA01 strain.</text>
</comment>
<comment type="similarity">
    <text evidence="5">Belongs to the cyclic nucleotide phosphodiesterase class-II family.</text>
</comment>
<organism>
    <name type="scientific">Dictyostelium discoideum</name>
    <name type="common">Social amoeba</name>
    <dbReference type="NCBI Taxonomy" id="44689"/>
    <lineage>
        <taxon>Eukaryota</taxon>
        <taxon>Amoebozoa</taxon>
        <taxon>Evosea</taxon>
        <taxon>Eumycetozoa</taxon>
        <taxon>Dictyostelia</taxon>
        <taxon>Dictyosteliales</taxon>
        <taxon>Dictyosteliaceae</taxon>
        <taxon>Dictyostelium</taxon>
    </lineage>
</organism>
<proteinExistence type="evidence at protein level"/>
<accession>P12019</accession>
<accession>Q54ME9</accession>